<dbReference type="EMBL" id="CR857578">
    <property type="protein sequence ID" value="CAH89856.1"/>
    <property type="molecule type" value="mRNA"/>
</dbReference>
<dbReference type="RefSeq" id="NP_001124863.1">
    <property type="nucleotide sequence ID" value="NM_001131391.1"/>
</dbReference>
<dbReference type="SMR" id="Q5REF1"/>
<dbReference type="FunCoup" id="Q5REF1">
    <property type="interactions" value="10"/>
</dbReference>
<dbReference type="GeneID" id="100171725"/>
<dbReference type="KEGG" id="pon:100171725"/>
<dbReference type="CTD" id="339318"/>
<dbReference type="eggNOG" id="KOG1721">
    <property type="taxonomic scope" value="Eukaryota"/>
</dbReference>
<dbReference type="InParanoid" id="Q5REF1"/>
<dbReference type="OrthoDB" id="427030at2759"/>
<dbReference type="Proteomes" id="UP000001595">
    <property type="component" value="Unplaced"/>
</dbReference>
<dbReference type="GO" id="GO:0005634">
    <property type="term" value="C:nucleus"/>
    <property type="evidence" value="ECO:0007669"/>
    <property type="project" value="UniProtKB-SubCell"/>
</dbReference>
<dbReference type="GO" id="GO:0000981">
    <property type="term" value="F:DNA-binding transcription factor activity, RNA polymerase II-specific"/>
    <property type="evidence" value="ECO:0007669"/>
    <property type="project" value="TreeGrafter"/>
</dbReference>
<dbReference type="GO" id="GO:0000978">
    <property type="term" value="F:RNA polymerase II cis-regulatory region sequence-specific DNA binding"/>
    <property type="evidence" value="ECO:0007669"/>
    <property type="project" value="TreeGrafter"/>
</dbReference>
<dbReference type="GO" id="GO:0008270">
    <property type="term" value="F:zinc ion binding"/>
    <property type="evidence" value="ECO:0007669"/>
    <property type="project" value="UniProtKB-KW"/>
</dbReference>
<dbReference type="CDD" id="cd07765">
    <property type="entry name" value="KRAB_A-box"/>
    <property type="match status" value="1"/>
</dbReference>
<dbReference type="FunFam" id="3.30.160.60:FF:000996">
    <property type="entry name" value="Zinc finger protein 181"/>
    <property type="match status" value="1"/>
</dbReference>
<dbReference type="FunFam" id="3.30.160.60:FF:000144">
    <property type="entry name" value="zinc finger protein 181 isoform X1"/>
    <property type="match status" value="2"/>
</dbReference>
<dbReference type="FunFam" id="3.30.160.60:FF:000745">
    <property type="entry name" value="zinc finger protein 181 isoform X1"/>
    <property type="match status" value="1"/>
</dbReference>
<dbReference type="FunFam" id="3.30.160.60:FF:001129">
    <property type="entry name" value="zinc finger protein 181 isoform X1"/>
    <property type="match status" value="1"/>
</dbReference>
<dbReference type="FunFam" id="3.30.160.60:FF:002049">
    <property type="entry name" value="Zinc finger protein 181 isoform X2"/>
    <property type="match status" value="1"/>
</dbReference>
<dbReference type="FunFam" id="3.30.160.60:FF:000800">
    <property type="entry name" value="zinc finger protein 181 isoform X2"/>
    <property type="match status" value="1"/>
</dbReference>
<dbReference type="FunFam" id="3.30.160.60:FF:001292">
    <property type="entry name" value="zinc finger protein 181 isoform X2"/>
    <property type="match status" value="1"/>
</dbReference>
<dbReference type="FunFam" id="3.30.160.60:FF:000295">
    <property type="entry name" value="zinc finger protein 19"/>
    <property type="match status" value="1"/>
</dbReference>
<dbReference type="FunFam" id="3.30.160.60:FF:000635">
    <property type="entry name" value="zinc finger protein 250 isoform X2"/>
    <property type="match status" value="1"/>
</dbReference>
<dbReference type="FunFam" id="3.30.160.60:FF:000281">
    <property type="entry name" value="Zinc finger protein 558 isoform X1"/>
    <property type="match status" value="1"/>
</dbReference>
<dbReference type="Gene3D" id="6.10.140.140">
    <property type="match status" value="1"/>
</dbReference>
<dbReference type="Gene3D" id="3.30.160.60">
    <property type="entry name" value="Classic Zinc Finger"/>
    <property type="match status" value="11"/>
</dbReference>
<dbReference type="InterPro" id="IPR050752">
    <property type="entry name" value="C2H2-ZF_domain"/>
</dbReference>
<dbReference type="InterPro" id="IPR001909">
    <property type="entry name" value="KRAB"/>
</dbReference>
<dbReference type="InterPro" id="IPR036051">
    <property type="entry name" value="KRAB_dom_sf"/>
</dbReference>
<dbReference type="InterPro" id="IPR036236">
    <property type="entry name" value="Znf_C2H2_sf"/>
</dbReference>
<dbReference type="InterPro" id="IPR013087">
    <property type="entry name" value="Znf_C2H2_type"/>
</dbReference>
<dbReference type="PANTHER" id="PTHR24384">
    <property type="entry name" value="FINGER PUTATIVE TRANSCRIPTION FACTOR FAMILY-RELATED"/>
    <property type="match status" value="1"/>
</dbReference>
<dbReference type="PANTHER" id="PTHR24384:SF246">
    <property type="entry name" value="GENE, 19965-RELATED"/>
    <property type="match status" value="1"/>
</dbReference>
<dbReference type="Pfam" id="PF01352">
    <property type="entry name" value="KRAB"/>
    <property type="match status" value="1"/>
</dbReference>
<dbReference type="Pfam" id="PF00096">
    <property type="entry name" value="zf-C2H2"/>
    <property type="match status" value="10"/>
</dbReference>
<dbReference type="Pfam" id="PF13912">
    <property type="entry name" value="zf-C2H2_6"/>
    <property type="match status" value="1"/>
</dbReference>
<dbReference type="SMART" id="SM00349">
    <property type="entry name" value="KRAB"/>
    <property type="match status" value="1"/>
</dbReference>
<dbReference type="SMART" id="SM00614">
    <property type="entry name" value="ZnF_BED"/>
    <property type="match status" value="3"/>
</dbReference>
<dbReference type="SMART" id="SM00355">
    <property type="entry name" value="ZnF_C2H2"/>
    <property type="match status" value="11"/>
</dbReference>
<dbReference type="SUPFAM" id="SSF57667">
    <property type="entry name" value="beta-beta-alpha zinc fingers"/>
    <property type="match status" value="6"/>
</dbReference>
<dbReference type="SUPFAM" id="SSF109640">
    <property type="entry name" value="KRAB domain (Kruppel-associated box)"/>
    <property type="match status" value="1"/>
</dbReference>
<dbReference type="PROSITE" id="PS50805">
    <property type="entry name" value="KRAB"/>
    <property type="match status" value="1"/>
</dbReference>
<dbReference type="PROSITE" id="PS00028">
    <property type="entry name" value="ZINC_FINGER_C2H2_1"/>
    <property type="match status" value="11"/>
</dbReference>
<dbReference type="PROSITE" id="PS50157">
    <property type="entry name" value="ZINC_FINGER_C2H2_2"/>
    <property type="match status" value="11"/>
</dbReference>
<proteinExistence type="evidence at transcript level"/>
<accession>Q5REF1</accession>
<protein>
    <recommendedName>
        <fullName>Zinc finger protein 181</fullName>
    </recommendedName>
</protein>
<evidence type="ECO:0000250" key="1">
    <source>
        <dbReference type="UniProtKB" id="Q2M3W8"/>
    </source>
</evidence>
<evidence type="ECO:0000255" key="2">
    <source>
        <dbReference type="PROSITE-ProRule" id="PRU00042"/>
    </source>
</evidence>
<evidence type="ECO:0000255" key="3">
    <source>
        <dbReference type="PROSITE-ProRule" id="PRU00119"/>
    </source>
</evidence>
<evidence type="ECO:0000305" key="4"/>
<sequence>MPQLQYPECYLAPNRCLVSNCGVNKMSNEELVGQNHGMEGEACTGEDVTFSDVAIDFSHEEWGWLNSAQRDLYKDVMVQNYENLVSVAGLSVTKPHVITLLEDGKEPWMMEKKLSKGLIPDWESRWENKELSTKKDIYDEDSPQTVIIEKVVKQSYEFSNSKMNLEYTEKLEGKHGSQVDHFRPAILTSRESPIADSVYKYNIFRSTFHSKSTLSEPQKISAEGNSYKYDILKKNLPKKSVIKNEKVNGGKKLLNSNKSGAAFSQGKSLALPQTCNREKIYTCSECGKAFGKQSILNRHWRIHTGEKPYECRECGKTFSHGSSLTRHLISHSGEKPYKCIECGKAFSHVSSLTNHQSTHTGEKPYECMNCGKSFSRVSHLIEHLRIHTQEKLYECRICGKAFIHRSSLIHHQKIHTGEKPYECRECGKAFCCSSHLTRHQRIHTMEKQYECNKCLKVFSSLSFLVQHQSIHTEEKPFECQKCRKSFNQLESLNMHLRNHIRLKPYECSICGKAFSHRSSLLQHHRIHTGEKPYECIKCGKTFSCSSNLTVHQRIHTGEKPYKCNECGKAFSKGSNLTAHQRVHNGEKPNSVVSVEKPLDHMNHYTCEKSYRRETI</sequence>
<name>ZN181_PONAB</name>
<feature type="chain" id="PRO_0000230667" description="Zinc finger protein 181">
    <location>
        <begin position="1"/>
        <end position="615"/>
    </location>
</feature>
<feature type="domain" description="KRAB" evidence="3">
    <location>
        <begin position="48"/>
        <end position="120"/>
    </location>
</feature>
<feature type="zinc finger region" description="C2H2-type 1" evidence="2">
    <location>
        <begin position="281"/>
        <end position="303"/>
    </location>
</feature>
<feature type="zinc finger region" description="C2H2-type 2" evidence="2">
    <location>
        <begin position="309"/>
        <end position="331"/>
    </location>
</feature>
<feature type="zinc finger region" description="C2H2-type 3" evidence="2">
    <location>
        <begin position="337"/>
        <end position="359"/>
    </location>
</feature>
<feature type="zinc finger region" description="C2H2-type 4" evidence="2">
    <location>
        <begin position="365"/>
        <end position="387"/>
    </location>
</feature>
<feature type="zinc finger region" description="C2H2-type 5" evidence="2">
    <location>
        <begin position="393"/>
        <end position="415"/>
    </location>
</feature>
<feature type="zinc finger region" description="C2H2-type 6" evidence="2">
    <location>
        <begin position="421"/>
        <end position="443"/>
    </location>
</feature>
<feature type="zinc finger region" description="C2H2-type 7" evidence="2">
    <location>
        <begin position="449"/>
        <end position="471"/>
    </location>
</feature>
<feature type="zinc finger region" description="C2H2-type 8" evidence="2">
    <location>
        <begin position="477"/>
        <end position="499"/>
    </location>
</feature>
<feature type="zinc finger region" description="C2H2-type 9" evidence="2">
    <location>
        <begin position="505"/>
        <end position="527"/>
    </location>
</feature>
<feature type="zinc finger region" description="C2H2-type 10" evidence="2">
    <location>
        <begin position="533"/>
        <end position="555"/>
    </location>
</feature>
<feature type="zinc finger region" description="C2H2-type 11" evidence="2">
    <location>
        <begin position="561"/>
        <end position="583"/>
    </location>
</feature>
<feature type="cross-link" description="Glycyl lysine isopeptide (Lys-Gly) (interchain with G-Cter in SUMO2)" evidence="1">
    <location>
        <position position="153"/>
    </location>
</feature>
<feature type="cross-link" description="Glycyl lysine isopeptide (Lys-Gly) (interchain with G-Cter in SUMO2)" evidence="1">
    <location>
        <position position="170"/>
    </location>
</feature>
<keyword id="KW-0238">DNA-binding</keyword>
<keyword id="KW-1017">Isopeptide bond</keyword>
<keyword id="KW-0479">Metal-binding</keyword>
<keyword id="KW-0539">Nucleus</keyword>
<keyword id="KW-1185">Reference proteome</keyword>
<keyword id="KW-0677">Repeat</keyword>
<keyword id="KW-0804">Transcription</keyword>
<keyword id="KW-0805">Transcription regulation</keyword>
<keyword id="KW-0832">Ubl conjugation</keyword>
<keyword id="KW-0862">Zinc</keyword>
<keyword id="KW-0863">Zinc-finger</keyword>
<reference key="1">
    <citation type="submission" date="2004-11" db="EMBL/GenBank/DDBJ databases">
        <authorList>
            <consortium name="The German cDNA consortium"/>
        </authorList>
    </citation>
    <scope>NUCLEOTIDE SEQUENCE [LARGE SCALE MRNA]</scope>
    <source>
        <tissue>Kidney</tissue>
    </source>
</reference>
<gene>
    <name type="primary">ZNF181</name>
</gene>
<organism>
    <name type="scientific">Pongo abelii</name>
    <name type="common">Sumatran orangutan</name>
    <name type="synonym">Pongo pygmaeus abelii</name>
    <dbReference type="NCBI Taxonomy" id="9601"/>
    <lineage>
        <taxon>Eukaryota</taxon>
        <taxon>Metazoa</taxon>
        <taxon>Chordata</taxon>
        <taxon>Craniata</taxon>
        <taxon>Vertebrata</taxon>
        <taxon>Euteleostomi</taxon>
        <taxon>Mammalia</taxon>
        <taxon>Eutheria</taxon>
        <taxon>Euarchontoglires</taxon>
        <taxon>Primates</taxon>
        <taxon>Haplorrhini</taxon>
        <taxon>Catarrhini</taxon>
        <taxon>Hominidae</taxon>
        <taxon>Pongo</taxon>
    </lineage>
</organism>
<comment type="function">
    <text>May be involved in transcriptional regulation.</text>
</comment>
<comment type="subcellular location">
    <subcellularLocation>
        <location evidence="4">Nucleus</location>
    </subcellularLocation>
</comment>
<comment type="similarity">
    <text evidence="4">Belongs to the krueppel C2H2-type zinc-finger protein family.</text>
</comment>